<keyword id="KW-0963">Cytoplasm</keyword>
<keyword id="KW-0489">Methyltransferase</keyword>
<keyword id="KW-0698">rRNA processing</keyword>
<keyword id="KW-0949">S-adenosyl-L-methionine</keyword>
<keyword id="KW-0808">Transferase</keyword>
<proteinExistence type="inferred from homology"/>
<accession>Q2W0P2</accession>
<organism>
    <name type="scientific">Paramagnetospirillum magneticum (strain ATCC 700264 / AMB-1)</name>
    <name type="common">Magnetospirillum magneticum</name>
    <dbReference type="NCBI Taxonomy" id="342108"/>
    <lineage>
        <taxon>Bacteria</taxon>
        <taxon>Pseudomonadati</taxon>
        <taxon>Pseudomonadota</taxon>
        <taxon>Alphaproteobacteria</taxon>
        <taxon>Rhodospirillales</taxon>
        <taxon>Magnetospirillaceae</taxon>
        <taxon>Paramagnetospirillum</taxon>
    </lineage>
</organism>
<protein>
    <recommendedName>
        <fullName evidence="1">Ribosomal RNA large subunit methyltransferase E</fullName>
        <ecNumber evidence="1">2.1.1.166</ecNumber>
    </recommendedName>
    <alternativeName>
        <fullName evidence="1">23S rRNA Um2552 methyltransferase</fullName>
    </alternativeName>
    <alternativeName>
        <fullName evidence="1">rRNA (uridine-2'-O-)-methyltransferase</fullName>
    </alternativeName>
</protein>
<name>RLME_PARM1</name>
<gene>
    <name evidence="1" type="primary">rlmE</name>
    <name evidence="1" type="synonym">ftsJ</name>
    <name evidence="1" type="synonym">rrmJ</name>
    <name type="ordered locus">amb3779</name>
</gene>
<feature type="chain" id="PRO_0000282758" description="Ribosomal RNA large subunit methyltransferase E">
    <location>
        <begin position="1"/>
        <end position="244"/>
    </location>
</feature>
<feature type="region of interest" description="Disordered" evidence="2">
    <location>
        <begin position="1"/>
        <end position="23"/>
    </location>
</feature>
<feature type="active site" description="Proton acceptor" evidence="1">
    <location>
        <position position="196"/>
    </location>
</feature>
<feature type="binding site" evidence="1">
    <location>
        <position position="91"/>
    </location>
    <ligand>
        <name>S-adenosyl-L-methionine</name>
        <dbReference type="ChEBI" id="CHEBI:59789"/>
    </ligand>
</feature>
<feature type="binding site" evidence="1">
    <location>
        <position position="93"/>
    </location>
    <ligand>
        <name>S-adenosyl-L-methionine</name>
        <dbReference type="ChEBI" id="CHEBI:59789"/>
    </ligand>
</feature>
<feature type="binding site" evidence="1">
    <location>
        <position position="116"/>
    </location>
    <ligand>
        <name>S-adenosyl-L-methionine</name>
        <dbReference type="ChEBI" id="CHEBI:59789"/>
    </ligand>
</feature>
<feature type="binding site" evidence="1">
    <location>
        <position position="132"/>
    </location>
    <ligand>
        <name>S-adenosyl-L-methionine</name>
        <dbReference type="ChEBI" id="CHEBI:59789"/>
    </ligand>
</feature>
<feature type="binding site" evidence="1">
    <location>
        <position position="156"/>
    </location>
    <ligand>
        <name>S-adenosyl-L-methionine</name>
        <dbReference type="ChEBI" id="CHEBI:59789"/>
    </ligand>
</feature>
<sequence>MATGGKKSAGRTTGSGPAGGSRNLTVKVKTAKRRKLSSTLWLQRQLNDPYVHEAKRLGYRSRAAFKMIQLDERFHILKPGLRVVDLGAAPGGWTQVAVEKVGALKPKGGGKVVGMDILEWDPLPGAITLQGDFLADDAPDRLKEALGGPADVVLSDMAAPTTGHPSTDHLRIIGLVEVALHFALEVLTPGGTFVAKVFQGGTEKTLLDQLKKNFTTVRHAKPPASRQGSAETYVVATGFRGSSE</sequence>
<evidence type="ECO:0000255" key="1">
    <source>
        <dbReference type="HAMAP-Rule" id="MF_01547"/>
    </source>
</evidence>
<evidence type="ECO:0000256" key="2">
    <source>
        <dbReference type="SAM" id="MobiDB-lite"/>
    </source>
</evidence>
<comment type="function">
    <text evidence="1">Specifically methylates the uridine in position 2552 of 23S rRNA at the 2'-O position of the ribose in the fully assembled 50S ribosomal subunit.</text>
</comment>
<comment type="catalytic activity">
    <reaction evidence="1">
        <text>uridine(2552) in 23S rRNA + S-adenosyl-L-methionine = 2'-O-methyluridine(2552) in 23S rRNA + S-adenosyl-L-homocysteine + H(+)</text>
        <dbReference type="Rhea" id="RHEA:42720"/>
        <dbReference type="Rhea" id="RHEA-COMP:10202"/>
        <dbReference type="Rhea" id="RHEA-COMP:10203"/>
        <dbReference type="ChEBI" id="CHEBI:15378"/>
        <dbReference type="ChEBI" id="CHEBI:57856"/>
        <dbReference type="ChEBI" id="CHEBI:59789"/>
        <dbReference type="ChEBI" id="CHEBI:65315"/>
        <dbReference type="ChEBI" id="CHEBI:74478"/>
        <dbReference type="EC" id="2.1.1.166"/>
    </reaction>
</comment>
<comment type="subcellular location">
    <subcellularLocation>
        <location evidence="1">Cytoplasm</location>
    </subcellularLocation>
</comment>
<comment type="similarity">
    <text evidence="1">Belongs to the class I-like SAM-binding methyltransferase superfamily. RNA methyltransferase RlmE family.</text>
</comment>
<dbReference type="EC" id="2.1.1.166" evidence="1"/>
<dbReference type="EMBL" id="AP007255">
    <property type="protein sequence ID" value="BAE52583.1"/>
    <property type="molecule type" value="Genomic_DNA"/>
</dbReference>
<dbReference type="RefSeq" id="WP_011386133.1">
    <property type="nucleotide sequence ID" value="NC_007626.1"/>
</dbReference>
<dbReference type="SMR" id="Q2W0P2"/>
<dbReference type="STRING" id="342108.amb3779"/>
<dbReference type="KEGG" id="mag:amb3779"/>
<dbReference type="HOGENOM" id="CLU_009422_4_0_5"/>
<dbReference type="OrthoDB" id="9790080at2"/>
<dbReference type="Proteomes" id="UP000007058">
    <property type="component" value="Chromosome"/>
</dbReference>
<dbReference type="GO" id="GO:0005737">
    <property type="term" value="C:cytoplasm"/>
    <property type="evidence" value="ECO:0007669"/>
    <property type="project" value="UniProtKB-SubCell"/>
</dbReference>
<dbReference type="GO" id="GO:0008650">
    <property type="term" value="F:rRNA (uridine-2'-O-)-methyltransferase activity"/>
    <property type="evidence" value="ECO:0007669"/>
    <property type="project" value="UniProtKB-UniRule"/>
</dbReference>
<dbReference type="Gene3D" id="3.40.50.150">
    <property type="entry name" value="Vaccinia Virus protein VP39"/>
    <property type="match status" value="1"/>
</dbReference>
<dbReference type="HAMAP" id="MF_01547">
    <property type="entry name" value="RNA_methyltr_E"/>
    <property type="match status" value="1"/>
</dbReference>
<dbReference type="InterPro" id="IPR050082">
    <property type="entry name" value="RNA_methyltr_RlmE"/>
</dbReference>
<dbReference type="InterPro" id="IPR002877">
    <property type="entry name" value="RNA_MeTrfase_FtsJ_dom"/>
</dbReference>
<dbReference type="InterPro" id="IPR015507">
    <property type="entry name" value="rRNA-MeTfrase_E"/>
</dbReference>
<dbReference type="InterPro" id="IPR029063">
    <property type="entry name" value="SAM-dependent_MTases_sf"/>
</dbReference>
<dbReference type="PANTHER" id="PTHR10920">
    <property type="entry name" value="RIBOSOMAL RNA METHYLTRANSFERASE"/>
    <property type="match status" value="1"/>
</dbReference>
<dbReference type="PANTHER" id="PTHR10920:SF18">
    <property type="entry name" value="RRNA METHYLTRANSFERASE 2, MITOCHONDRIAL"/>
    <property type="match status" value="1"/>
</dbReference>
<dbReference type="Pfam" id="PF01728">
    <property type="entry name" value="FtsJ"/>
    <property type="match status" value="1"/>
</dbReference>
<dbReference type="PIRSF" id="PIRSF005461">
    <property type="entry name" value="23S_rRNA_mtase"/>
    <property type="match status" value="1"/>
</dbReference>
<dbReference type="SUPFAM" id="SSF53335">
    <property type="entry name" value="S-adenosyl-L-methionine-dependent methyltransferases"/>
    <property type="match status" value="1"/>
</dbReference>
<reference key="1">
    <citation type="journal article" date="2005" name="DNA Res.">
        <title>Complete genome sequence of the facultative anaerobic magnetotactic bacterium Magnetospirillum sp. strain AMB-1.</title>
        <authorList>
            <person name="Matsunaga T."/>
            <person name="Okamura Y."/>
            <person name="Fukuda Y."/>
            <person name="Wahyudi A.T."/>
            <person name="Murase Y."/>
            <person name="Takeyama H."/>
        </authorList>
    </citation>
    <scope>NUCLEOTIDE SEQUENCE [LARGE SCALE GENOMIC DNA]</scope>
    <source>
        <strain>ATCC 700264 / AMB-1</strain>
    </source>
</reference>